<name>NPHN_MOUSE</name>
<organism>
    <name type="scientific">Mus musculus</name>
    <name type="common">Mouse</name>
    <dbReference type="NCBI Taxonomy" id="10090"/>
    <lineage>
        <taxon>Eukaryota</taxon>
        <taxon>Metazoa</taxon>
        <taxon>Chordata</taxon>
        <taxon>Craniata</taxon>
        <taxon>Vertebrata</taxon>
        <taxon>Euteleostomi</taxon>
        <taxon>Mammalia</taxon>
        <taxon>Eutheria</taxon>
        <taxon>Euarchontoglires</taxon>
        <taxon>Glires</taxon>
        <taxon>Rodentia</taxon>
        <taxon>Myomorpha</taxon>
        <taxon>Muroidea</taxon>
        <taxon>Muridae</taxon>
        <taxon>Murinae</taxon>
        <taxon>Mus</taxon>
        <taxon>Mus</taxon>
    </lineage>
</organism>
<keyword id="KW-0025">Alternative splicing</keyword>
<keyword id="KW-0130">Cell adhesion</keyword>
<keyword id="KW-1003">Cell membrane</keyword>
<keyword id="KW-0217">Developmental protein</keyword>
<keyword id="KW-1015">Disulfide bond</keyword>
<keyword id="KW-0325">Glycoprotein</keyword>
<keyword id="KW-0393">Immunoglobulin domain</keyword>
<keyword id="KW-0472">Membrane</keyword>
<keyword id="KW-0517">Myogenesis</keyword>
<keyword id="KW-0597">Phosphoprotein</keyword>
<keyword id="KW-1185">Reference proteome</keyword>
<keyword id="KW-0677">Repeat</keyword>
<keyword id="KW-0732">Signal</keyword>
<keyword id="KW-0812">Transmembrane</keyword>
<keyword id="KW-1133">Transmembrane helix</keyword>
<evidence type="ECO:0000250" key="1">
    <source>
        <dbReference type="UniProtKB" id="O60500"/>
    </source>
</evidence>
<evidence type="ECO:0000250" key="2">
    <source>
        <dbReference type="UniProtKB" id="Q9R044"/>
    </source>
</evidence>
<evidence type="ECO:0000255" key="3"/>
<evidence type="ECO:0000255" key="4">
    <source>
        <dbReference type="PROSITE-ProRule" id="PRU00114"/>
    </source>
</evidence>
<evidence type="ECO:0000255" key="5">
    <source>
        <dbReference type="PROSITE-ProRule" id="PRU00316"/>
    </source>
</evidence>
<evidence type="ECO:0000256" key="6">
    <source>
        <dbReference type="SAM" id="MobiDB-lite"/>
    </source>
</evidence>
<evidence type="ECO:0000269" key="7">
    <source>
    </source>
</evidence>
<evidence type="ECO:0000269" key="8">
    <source>
    </source>
</evidence>
<evidence type="ECO:0000269" key="9">
    <source>
    </source>
</evidence>
<evidence type="ECO:0000269" key="10">
    <source>
    </source>
</evidence>
<evidence type="ECO:0000269" key="11">
    <source>
    </source>
</evidence>
<evidence type="ECO:0000269" key="12">
    <source>
    </source>
</evidence>
<evidence type="ECO:0000269" key="13">
    <source>
    </source>
</evidence>
<evidence type="ECO:0000269" key="14">
    <source>
    </source>
</evidence>
<evidence type="ECO:0000269" key="15">
    <source>
    </source>
</evidence>
<evidence type="ECO:0000269" key="16">
    <source>
    </source>
</evidence>
<evidence type="ECO:0000269" key="17">
    <source>
    </source>
</evidence>
<evidence type="ECO:0000269" key="18">
    <source>
    </source>
</evidence>
<evidence type="ECO:0000269" key="19">
    <source>
    </source>
</evidence>
<evidence type="ECO:0000269" key="20">
    <source>
    </source>
</evidence>
<evidence type="ECO:0000303" key="21">
    <source>
    </source>
</evidence>
<evidence type="ECO:0000305" key="22"/>
<accession>Q9QZS7</accession>
<accession>D2KXA7</accession>
<accession>Q811S5</accession>
<accession>Q925S5</accession>
<accession>Q9ESC6</accession>
<accession>Q9ET59</accession>
<accession>Q9JIX1</accession>
<proteinExistence type="evidence at protein level"/>
<sequence length="1256" mass="136336">MGAKEATVRGPGASPVHRTCHLIPLLLAGMLTTGLAQSPVPTSAPRGFWALSENLTVVEGSTVKLWCGVRAPGSVVQWAKDGLLLGPNPKIPGFPRYSLEGDSAKGEFHLLIEACDLSDDAEYECQVGRSELGPELVSPSVILSILVSPKVLQLTPEAGSTVTWVAGQEYVVTCVSGDAKPAPDIIFIQGGRTVEDVSSSVNEGSEEKLFFTEAEARVTPQSSDNGQLLVCEGSNPALATPIKASFTMNILFPPGPPVIDWPGLNEGHVRAGENLELPCIARGGNPPATLQWLKNGKPVSIAWGTEHAQAVAHSVLVMTVRPEDHGARLSCQSYNSVSAETQERSITLQVTFPPSAVTILGSTSQSENKNVTLCCLTKSSRPRVLLRWWLGGRQLLPTDETVMDGLHGGHISMSNLTLLVKREDNGLSLTCEAFSDAFSKETFKKSLTLNVKYPAQKLWIEGPPEGQSIRTGTRVRLVCLAIGGNPEPSLTWLKDSRPVNDPRQSQEPRRVQLGSVEKSGSTFSRELVLIIGPPDNLAKFSCKAGQLSASTQLVVQFPPTNLTILANSSALRPGDALNLTCVSISSNPPVNLSLDKEGERLDDVAAKPQSAPFKGSAASRSVFLRVSSRDHGHRVTCRAHSEALRETVSSFYRLNVLYPPEFLGEQVRAVTVVEQGQALLPVSVSANPAPEAFNWTFRGYRLSPAGGPRHRILSGGALQLWNVTRADDGFYQLHCQNSEGTAEALLKLDVHYAPTIRALKDPTEVNVGGSVDIVCTVDANPILPEMFSWERLGEDEEELNLDDMEKMSKGSTGRLRIRQAKLSQAGAYQCIVDNGVAPAARGLVRLVVRFAPQVDHPTPLTKVAAAGDSTSSATLHCRARGVPNIDFTWTKNGVPLDLQDPRYTEHKYHQGVVHSSLLTIANVSAAQDYALFKCTATNALGSDHTNIQLVSISRPDPPLGLKVVSVSPHSVGLEWKPGFDGGLPQRFQIRYEALESPGFLYMDVLPAQATTFTLTGLKPSTRYRIWLLASNALGDSGLTDKGIQVSITTPGLDQAPEDTDQPLPTEQPPGPPRLPLLPVLFAVGGLLLLSNASCVGGLLWRRRLRRLAEEISEKTEAGSEEDRIRNEYEESQWTGDRDTRSSTVSTAEVDPHYYSMRDFSPQLPPTLEEVSYRQAFTGIEDEDMAFPGHLYDEVERVYGPPGVWGPLYDEVQMDPYDLRWPEVKYEDPRGIYDQVAADMDAGEPGSLPFELRGHLV</sequence>
<comment type="function">
    <text evidence="9 12 19">Seems to play a role in the development or function of the kidney glomerular filtration barrier. Regulates glomerular vascular permeability. May anchor the podocyte slit diaphragm to the actin cytoskeleton. Plays a role in skeletal muscle formation through regulation of myoblast fusion.</text>
</comment>
<comment type="subunit">
    <text evidence="1 2 10 11 13 15 16 17 18 20">Interacts with NPHS2 and with CD2AP (via C-terminal domain). Interacts with MAGI1 (via PDZ 2 and 3 domains) forming a tripartite complex with IGSF5/JAM4. Forms a complex with ACTN4, CASK, IQGAP1, MAGI2, SPTAN1 and SPTBN1 (By similarity). Interacts with DDN; the interaction is direct. Self-associates (via the Ig-like domains). Also interacts (via the Ig-like domains) with KIRREL1 and KIRREL2; the interaction with KIRREL1 is dependent on KIRREL1 glycosylation. Interacts with KIRREL3 (PubMed:15843475, PubMed:18752272). Interacts with phosphatidylinositol 3-kinase regulatory subunit PIK3R1; the interaction is reduced by high glucose levels (By similarity).</text>
</comment>
<comment type="subcellular location">
    <subcellularLocation>
        <location evidence="22">Cell membrane</location>
        <topology evidence="22">Single-pass type I membrane protein</topology>
    </subcellularLocation>
    <text evidence="7">Located at podocyte slit diaphragm between podocyte foot processes.</text>
</comment>
<comment type="alternative products">
    <event type="alternative splicing"/>
    <isoform>
        <id>Q9QZS7-1</id>
        <name>1</name>
        <name>NephrinA</name>
        <sequence type="displayed"/>
    </isoform>
    <isoform>
        <id>Q9QZS7-2</id>
        <name>2</name>
        <name>NephrinB</name>
        <sequence type="described" ref="VSP_040676"/>
    </isoform>
</comment>
<comment type="tissue specificity">
    <text evidence="8 9 14 19 20">Expressed in kidney glomeruli. In the embryo, expressed in the mesonephric kidney at 11 dpc with strong expression in cranial tubules with podocyte-like structures. Expression is observed in the podocytes of the developing kidney from 13 dpc. High expression is also detected in the developing cerebellum, hindbrain, spinal cord, retina and hypothalamus. Expressed in skeletal muscle during myoblast fusion such as in the adult following acute injury and in the embryo but not detected in uninjured adult skeletal muscle. Isoform 1 and isoform 2 are expressed in the newborn brain and developing cerebellum. Isoform 1 is the predominant isoform in adult kidney.</text>
</comment>
<comment type="PTM">
    <text evidence="1 2">Phosphorylated at Tyr-1208 by FYN, leading to the recruitment and activation of phospholipase C-gamma-1/PLCG1 (By similarity). Tyrosine phosphorylation is reduced by high glucose levels (By similarity). Dephosphorylated by tensin TNS2 which leads to reduced binding of NPHN1 to PIK3R1 (By similarity).</text>
</comment>
<comment type="disruption phenotype">
    <text evidence="9 12 19">Death by postnatal day 2 associated with proteinuria, edema and massive glomerular vascular leak. Kidneys display enlarged Bowman's spaces, dilated tubuli, effacement of podocyte foot processes and an absence of the glomerular epithelial slit diaphragm. Impaired skeletal muscle development characterized by incomplete myoblast fusion.</text>
</comment>
<comment type="similarity">
    <text evidence="22">Belongs to the immunoglobulin superfamily.</text>
</comment>
<reference key="1">
    <citation type="journal article" date="1999" name="Kidney Int.">
        <title>Nephrin localizes to the slit pore of the glomerular epithelial cell.</title>
        <authorList>
            <person name="Holzman L.B."/>
            <person name="St John P.L."/>
            <person name="Kovari I.A."/>
            <person name="Verma R."/>
            <person name="Holthoefer H."/>
            <person name="Abrahamson D.R."/>
        </authorList>
    </citation>
    <scope>NUCLEOTIDE SEQUENCE [MRNA] (ISOFORM 1)</scope>
    <scope>SUBCELLULAR LOCATION</scope>
</reference>
<reference key="2">
    <citation type="journal article" date="2000" name="J. Am. Soc. Nephrol.">
        <title>Primary structure of mouse and rat nephrin cDNA and structure and expression of the mouse gene.</title>
        <authorList>
            <person name="Putaala H."/>
            <person name="Sainio K."/>
            <person name="Sariola H."/>
            <person name="Tryggvason K."/>
        </authorList>
    </citation>
    <scope>NUCLEOTIDE SEQUENCE [GENOMIC DNA / MRNA] (ISOFORM 1)</scope>
    <scope>TISSUE SPECIFICITY</scope>
    <source>
        <tissue>Kidney</tissue>
    </source>
</reference>
<reference key="3">
    <citation type="journal article" date="2002" name="J. Biol. Chem.">
        <title>Determinants of vascular permeability in the kidney glomerulus.</title>
        <authorList>
            <person name="Hamano Y."/>
            <person name="Grunkemeyer J.A."/>
            <person name="Sudhakar A."/>
            <person name="Zeisberg M."/>
            <person name="Cosgrove D."/>
            <person name="Morello R."/>
            <person name="Lee B."/>
            <person name="Sugimoto H."/>
            <person name="Kalluri R."/>
        </authorList>
    </citation>
    <scope>NUCLEOTIDE SEQUENCE [MRNA] (ISOFORM 1)</scope>
    <scope>NUCLEOTIDE SEQUENCE [GENOMIC DNA] OF 1-494 (ISOFORM 1)</scope>
    <scope>FUNCTION</scope>
    <scope>DISRUPTION PHENOTYPE</scope>
    <source>
        <strain>129/SvEv</strain>
        <strain>C57BL/6J</strain>
    </source>
</reference>
<reference key="4">
    <citation type="journal article" date="2010" name="J. Biol. Chem.">
        <title>Ptf1a directly controls expression of immunoglobulin superfamily molecules Nephrin and Neph3 in the developing central nervous system.</title>
        <authorList>
            <person name="Nishida K."/>
            <person name="Hoshino M."/>
            <person name="Kawaguchi Y."/>
            <person name="Murakami F."/>
        </authorList>
    </citation>
    <scope>NUCLEOTIDE SEQUENCE [MRNA] (ISOFORM 2)</scope>
    <scope>SELF-ASSOCIATION</scope>
    <scope>INTERACTION WITH KIRREL2</scope>
    <scope>TISSUE SPECIFICITY</scope>
</reference>
<reference key="5">
    <citation type="journal article" date="2009" name="PLoS Biol.">
        <title>Lineage-specific biology revealed by a finished genome assembly of the mouse.</title>
        <authorList>
            <person name="Church D.M."/>
            <person name="Goodstadt L."/>
            <person name="Hillier L.W."/>
            <person name="Zody M.C."/>
            <person name="Goldstein S."/>
            <person name="She X."/>
            <person name="Bult C.J."/>
            <person name="Agarwala R."/>
            <person name="Cherry J.L."/>
            <person name="DiCuccio M."/>
            <person name="Hlavina W."/>
            <person name="Kapustin Y."/>
            <person name="Meric P."/>
            <person name="Maglott D."/>
            <person name="Birtle Z."/>
            <person name="Marques A.C."/>
            <person name="Graves T."/>
            <person name="Zhou S."/>
            <person name="Teague B."/>
            <person name="Potamousis K."/>
            <person name="Churas C."/>
            <person name="Place M."/>
            <person name="Herschleb J."/>
            <person name="Runnheim R."/>
            <person name="Forrest D."/>
            <person name="Amos-Landgraf J."/>
            <person name="Schwartz D.C."/>
            <person name="Cheng Z."/>
            <person name="Lindblad-Toh K."/>
            <person name="Eichler E.E."/>
            <person name="Ponting C.P."/>
        </authorList>
    </citation>
    <scope>NUCLEOTIDE SEQUENCE [LARGE SCALE GENOMIC DNA]</scope>
    <source>
        <strain>C57BL/6J</strain>
    </source>
</reference>
<reference key="6">
    <citation type="journal article" date="2003" name="J. Am. Soc. Nephrol.">
        <title>Alternatively used promoters and distinct elements direct tissue-specific expression of nephrin.</title>
        <authorList>
            <person name="Beltcheva O."/>
            <person name="Kontusaari S."/>
            <person name="Fetissov S."/>
            <person name="Putaala H."/>
            <person name="Kilpelainen P."/>
            <person name="Hokfelt T."/>
            <person name="Tryggvason K."/>
        </authorList>
    </citation>
    <scope>NUCLEOTIDE SEQUENCE [GENOMIC DNA] OF 1-19 (ISOFORM 2)</scope>
    <scope>TISSUE SPECIFICITY</scope>
    <scope>ALTERNATIVE SPLICING</scope>
    <source>
        <strain>129/Sv</strain>
    </source>
</reference>
<reference key="7">
    <citation type="journal article" date="2001" name="Am. J. Pathol.">
        <title>CD2AP localizes to the slit diaphragm and binds to nephrin via a novel C-terminal domain.</title>
        <authorList>
            <person name="Shih N.Y."/>
            <person name="Li J."/>
            <person name="Cotran R."/>
            <person name="Mundel P."/>
            <person name="Miner J.H."/>
            <person name="Shaw A.S."/>
        </authorList>
    </citation>
    <scope>INTERACTION WITH CD2AP</scope>
</reference>
<reference key="8">
    <citation type="journal article" date="2001" name="Hum. Mol. Genet.">
        <title>The murine nephrin gene is specifically expressed in kidney, brain and pancreas: inactivation of the gene leads to massive proteinuria and neonatal death.</title>
        <authorList>
            <person name="Putaala H."/>
            <person name="Soininen R."/>
            <person name="Kilpelainen P."/>
            <person name="Wartiovaara J."/>
            <person name="Tryggvason K."/>
        </authorList>
    </citation>
    <scope>FUNCTION</scope>
    <scope>TISSUE SPECIFICITY</scope>
    <scope>DISRUPTION PHENOTYPE</scope>
</reference>
<reference key="9">
    <citation type="journal article" date="2001" name="J. Clin. Invest.">
        <title>Podocin, a raft-associated component of the glomerular slit diaphragm, interacts with CD2AP and nephrin.</title>
        <authorList>
            <person name="Schwarz K."/>
            <person name="Simons M."/>
            <person name="Reiser J."/>
            <person name="Saleem M.A."/>
            <person name="Faul C."/>
            <person name="Kriz W."/>
            <person name="Shaw A.S."/>
            <person name="Holzman L.B."/>
            <person name="Mundel P."/>
        </authorList>
    </citation>
    <scope>INTERACTION WITH CD2AP AND NPHS2</scope>
</reference>
<reference key="10">
    <citation type="journal article" date="2003" name="FASEB J.">
        <title>NEPH1 defines a novel family of podocin interacting proteins.</title>
        <authorList>
            <person name="Sellin L."/>
            <person name="Huber T.B."/>
            <person name="Gerke P."/>
            <person name="Quack I."/>
            <person name="Pavenstaedt H."/>
            <person name="Walz G."/>
        </authorList>
    </citation>
    <scope>INTERACTION WITH KIRREL1</scope>
    <source>
        <strain>Swiss Webster</strain>
        <tissue>Brain</tissue>
    </source>
</reference>
<reference key="11">
    <citation type="journal article" date="2003" name="J. Am. Soc. Nephrol.">
        <title>Homodimerization and heterodimerization of the glomerular podocyte proteins nephrin and NEPH1.</title>
        <authorList>
            <person name="Gerke P."/>
            <person name="Huber T.B."/>
            <person name="Sellin L."/>
            <person name="Benzing T."/>
            <person name="Walz G."/>
        </authorList>
    </citation>
    <scope>SELF-ASSOCIATION</scope>
    <scope>INTERACTION WITH KIRREL1</scope>
</reference>
<reference key="12">
    <citation type="journal article" date="2005" name="J. Am. Soc. Nephrol.">
        <title>NEPH2 is located at the glomerular slit diaphragm, interacts with nephrin and is cleaved from podocytes by metalloproteinases.</title>
        <authorList>
            <person name="Gerke P."/>
            <person name="Sellin L."/>
            <person name="Kretz O."/>
            <person name="Petraschka D."/>
            <person name="Zentgraf H."/>
            <person name="Benzing T."/>
            <person name="Walz G."/>
        </authorList>
    </citation>
    <scope>INTERACTION WITH KIRREL3</scope>
</reference>
<reference key="13">
    <citation type="journal article" date="2007" name="Proc. Natl. Acad. Sci. U.S.A.">
        <title>Nuclear relocation of the nephrin and CD2AP-binding protein dendrin promotes apoptosis of podocytes.</title>
        <authorList>
            <person name="Asanuma K."/>
            <person name="Campbell K.N."/>
            <person name="Kim K."/>
            <person name="Faul C."/>
            <person name="Mundel P."/>
        </authorList>
    </citation>
    <scope>INTERACTION WITH DDN</scope>
</reference>
<reference key="14">
    <citation type="journal article" date="2008" name="J. Comp. Neurol.">
        <title>Expression of kin of irregular chiasm-like 3/mKirre in proprioceptive neurons of the dorsal root ganglia and its interaction with nephrin in muscle spindles.</title>
        <authorList>
            <person name="Komori T."/>
            <person name="Gyobu H."/>
            <person name="Ueno H."/>
            <person name="Kitamura T."/>
            <person name="Senba E."/>
            <person name="Morikawa Y."/>
        </authorList>
    </citation>
    <scope>INTERACTION WITH KIRREL3</scope>
</reference>
<reference key="15">
    <citation type="journal article" date="2009" name="Proc. Natl. Acad. Sci. U.S.A.">
        <title>A role for nephrin, a renal protein, in vertebrate skeletal muscle cell fusion.</title>
        <authorList>
            <person name="Sohn R.L."/>
            <person name="Huang P."/>
            <person name="Kawahara G."/>
            <person name="Mitchell M."/>
            <person name="Guyon J."/>
            <person name="Kalluri R."/>
            <person name="Kunkel L.M."/>
            <person name="Gussoni E."/>
        </authorList>
    </citation>
    <scope>FUNCTION</scope>
    <scope>TISSUE SPECIFICITY</scope>
    <scope>DISRUPTION PHENOTYPE</scope>
</reference>
<reference key="16">
    <citation type="journal article" date="2010" name="Cell">
        <title>A tissue-specific atlas of mouse protein phosphorylation and expression.</title>
        <authorList>
            <person name="Huttlin E.L."/>
            <person name="Jedrychowski M.P."/>
            <person name="Elias J.E."/>
            <person name="Goswami T."/>
            <person name="Rad R."/>
            <person name="Beausoleil S.A."/>
            <person name="Villen J."/>
            <person name="Haas W."/>
            <person name="Sowa M.E."/>
            <person name="Gygi S.P."/>
        </authorList>
    </citation>
    <scope>IDENTIFICATION BY MASS SPECTROMETRY [LARGE SCALE ANALYSIS]</scope>
    <source>
        <tissue>Kidney</tissue>
    </source>
</reference>
<protein>
    <recommendedName>
        <fullName>Nephrin</fullName>
    </recommendedName>
    <alternativeName>
        <fullName>Renal glomerulus-specific cell adhesion receptor</fullName>
    </alternativeName>
</protein>
<dbReference type="EMBL" id="AF168466">
    <property type="protein sequence ID" value="AAF03368.1"/>
    <property type="molecule type" value="mRNA"/>
</dbReference>
<dbReference type="EMBL" id="AF172254">
    <property type="protein sequence ID" value="AAF91085.1"/>
    <property type="molecule type" value="Genomic_DNA"/>
</dbReference>
<dbReference type="EMBL" id="AF172247">
    <property type="protein sequence ID" value="AAF91085.1"/>
    <property type="status" value="JOINED"/>
    <property type="molecule type" value="Genomic_DNA"/>
</dbReference>
<dbReference type="EMBL" id="AF172248">
    <property type="protein sequence ID" value="AAF91085.1"/>
    <property type="status" value="JOINED"/>
    <property type="molecule type" value="Genomic_DNA"/>
</dbReference>
<dbReference type="EMBL" id="AF172249">
    <property type="protein sequence ID" value="AAF91085.1"/>
    <property type="status" value="JOINED"/>
    <property type="molecule type" value="Genomic_DNA"/>
</dbReference>
<dbReference type="EMBL" id="AF172250">
    <property type="protein sequence ID" value="AAF91085.1"/>
    <property type="status" value="JOINED"/>
    <property type="molecule type" value="Genomic_DNA"/>
</dbReference>
<dbReference type="EMBL" id="AF172251">
    <property type="protein sequence ID" value="AAF91085.1"/>
    <property type="status" value="JOINED"/>
    <property type="molecule type" value="Genomic_DNA"/>
</dbReference>
<dbReference type="EMBL" id="AF172252">
    <property type="protein sequence ID" value="AAF91085.1"/>
    <property type="status" value="JOINED"/>
    <property type="molecule type" value="Genomic_DNA"/>
</dbReference>
<dbReference type="EMBL" id="AF172253">
    <property type="protein sequence ID" value="AAF91085.1"/>
    <property type="status" value="JOINED"/>
    <property type="molecule type" value="Genomic_DNA"/>
</dbReference>
<dbReference type="EMBL" id="AF172256">
    <property type="protein sequence ID" value="AAF91087.1"/>
    <property type="molecule type" value="mRNA"/>
</dbReference>
<dbReference type="EMBL" id="AF190638">
    <property type="protein sequence ID" value="AAG17142.1"/>
    <property type="molecule type" value="Genomic_DNA"/>
</dbReference>
<dbReference type="EMBL" id="AF191090">
    <property type="protein sequence ID" value="AAK38483.1"/>
    <property type="molecule type" value="mRNA"/>
</dbReference>
<dbReference type="EMBL" id="AB513652">
    <property type="protein sequence ID" value="BAI63574.1"/>
    <property type="molecule type" value="mRNA"/>
</dbReference>
<dbReference type="EMBL" id="AC167970">
    <property type="status" value="NOT_ANNOTATED_CDS"/>
    <property type="molecule type" value="mRNA"/>
</dbReference>
<dbReference type="EMBL" id="AY183460">
    <property type="protein sequence ID" value="AAO22850.1"/>
    <property type="molecule type" value="Genomic_DNA"/>
</dbReference>
<dbReference type="CCDS" id="CCDS39884.1">
    <molecule id="Q9QZS7-1"/>
</dbReference>
<dbReference type="RefSeq" id="NP_062332.2">
    <molecule id="Q9QZS7-1"/>
    <property type="nucleotide sequence ID" value="NM_019459.2"/>
</dbReference>
<dbReference type="RefSeq" id="XP_011248949.1">
    <molecule id="Q9QZS7-2"/>
    <property type="nucleotide sequence ID" value="XM_011250647.3"/>
</dbReference>
<dbReference type="RefSeq" id="XP_036009153.1">
    <molecule id="Q9QZS7-2"/>
    <property type="nucleotide sequence ID" value="XM_036153260.1"/>
</dbReference>
<dbReference type="BioGRID" id="207694">
    <property type="interactions" value="6"/>
</dbReference>
<dbReference type="DIP" id="DIP-61265N"/>
<dbReference type="FunCoup" id="Q9QZS7">
    <property type="interactions" value="119"/>
</dbReference>
<dbReference type="IntAct" id="Q9QZS7">
    <property type="interactions" value="3"/>
</dbReference>
<dbReference type="STRING" id="10090.ENSMUSP00000006825"/>
<dbReference type="GlyCosmos" id="Q9QZS7">
    <property type="glycosylation" value="7 sites, No reported glycans"/>
</dbReference>
<dbReference type="GlyGen" id="Q9QZS7">
    <property type="glycosylation" value="7 sites"/>
</dbReference>
<dbReference type="iPTMnet" id="Q9QZS7"/>
<dbReference type="PhosphoSitePlus" id="Q9QZS7"/>
<dbReference type="jPOST" id="Q9QZS7"/>
<dbReference type="PaxDb" id="10090-ENSMUSP00000006825"/>
<dbReference type="ProteomicsDB" id="293879">
    <molecule id="Q9QZS7-1"/>
</dbReference>
<dbReference type="ProteomicsDB" id="293880">
    <molecule id="Q9QZS7-2"/>
</dbReference>
<dbReference type="Antibodypedia" id="29541">
    <property type="antibodies" value="744 antibodies from 40 providers"/>
</dbReference>
<dbReference type="DNASU" id="54631"/>
<dbReference type="Ensembl" id="ENSMUST00000006825.9">
    <molecule id="Q9QZS7-1"/>
    <property type="protein sequence ID" value="ENSMUSP00000006825.9"/>
    <property type="gene ID" value="ENSMUSG00000006649.18"/>
</dbReference>
<dbReference type="Ensembl" id="ENSMUST00000126297.9">
    <molecule id="Q9QZS7-2"/>
    <property type="protein sequence ID" value="ENSMUSP00000116500.3"/>
    <property type="gene ID" value="ENSMUSG00000006649.18"/>
</dbReference>
<dbReference type="GeneID" id="54631"/>
<dbReference type="KEGG" id="mmu:54631"/>
<dbReference type="UCSC" id="uc009gem.1">
    <molecule id="Q9QZS7-2"/>
    <property type="organism name" value="mouse"/>
</dbReference>
<dbReference type="UCSC" id="uc009gen.1">
    <molecule id="Q9QZS7-1"/>
    <property type="organism name" value="mouse"/>
</dbReference>
<dbReference type="AGR" id="MGI:1859637"/>
<dbReference type="CTD" id="4868"/>
<dbReference type="MGI" id="MGI:1859637">
    <property type="gene designation" value="Nphs1"/>
</dbReference>
<dbReference type="VEuPathDB" id="HostDB:ENSMUSG00000006649"/>
<dbReference type="eggNOG" id="KOG3515">
    <property type="taxonomic scope" value="Eukaryota"/>
</dbReference>
<dbReference type="GeneTree" id="ENSGT00940000159510"/>
<dbReference type="HOGENOM" id="CLU_003881_0_1_1"/>
<dbReference type="InParanoid" id="Q9QZS7"/>
<dbReference type="OMA" id="FITVCHA"/>
<dbReference type="OrthoDB" id="10028801at2759"/>
<dbReference type="PhylomeDB" id="Q9QZS7"/>
<dbReference type="TreeFam" id="TF327139"/>
<dbReference type="Reactome" id="R-MMU-373753">
    <property type="pathway name" value="Nephrin family interactions"/>
</dbReference>
<dbReference type="BioGRID-ORCS" id="54631">
    <property type="hits" value="2 hits in 78 CRISPR screens"/>
</dbReference>
<dbReference type="ChiTaRS" id="Nphs1">
    <property type="organism name" value="mouse"/>
</dbReference>
<dbReference type="PRO" id="PR:Q9QZS7"/>
<dbReference type="Proteomes" id="UP000000589">
    <property type="component" value="Chromosome 7"/>
</dbReference>
<dbReference type="RNAct" id="Q9QZS7">
    <property type="molecule type" value="protein"/>
</dbReference>
<dbReference type="Bgee" id="ENSMUSG00000006649">
    <property type="expression patterns" value="Expressed in renal glomerulus and 60 other cell types or tissues"/>
</dbReference>
<dbReference type="ExpressionAtlas" id="Q9QZS7">
    <property type="expression patterns" value="baseline and differential"/>
</dbReference>
<dbReference type="GO" id="GO:0071944">
    <property type="term" value="C:cell periphery"/>
    <property type="evidence" value="ECO:0000314"/>
    <property type="project" value="MGI"/>
</dbReference>
<dbReference type="GO" id="GO:0042995">
    <property type="term" value="C:cell projection"/>
    <property type="evidence" value="ECO:0000314"/>
    <property type="project" value="UniProtKB"/>
</dbReference>
<dbReference type="GO" id="GO:0005925">
    <property type="term" value="C:focal adhesion"/>
    <property type="evidence" value="ECO:0000314"/>
    <property type="project" value="MGI"/>
</dbReference>
<dbReference type="GO" id="GO:0016020">
    <property type="term" value="C:membrane"/>
    <property type="evidence" value="ECO:0000304"/>
    <property type="project" value="MGI"/>
</dbReference>
<dbReference type="GO" id="GO:0005886">
    <property type="term" value="C:plasma membrane"/>
    <property type="evidence" value="ECO:0000314"/>
    <property type="project" value="MGI"/>
</dbReference>
<dbReference type="GO" id="GO:0036057">
    <property type="term" value="C:slit diaphragm"/>
    <property type="evidence" value="ECO:0000250"/>
    <property type="project" value="UniProtKB"/>
</dbReference>
<dbReference type="GO" id="GO:0017022">
    <property type="term" value="F:myosin binding"/>
    <property type="evidence" value="ECO:0007669"/>
    <property type="project" value="Ensembl"/>
</dbReference>
<dbReference type="GO" id="GO:0007155">
    <property type="term" value="P:cell adhesion"/>
    <property type="evidence" value="ECO:0000316"/>
    <property type="project" value="MGI"/>
</dbReference>
<dbReference type="GO" id="GO:0010467">
    <property type="term" value="P:gene expression"/>
    <property type="evidence" value="ECO:0000315"/>
    <property type="project" value="MGI"/>
</dbReference>
<dbReference type="GO" id="GO:0032836">
    <property type="term" value="P:glomerular basement membrane development"/>
    <property type="evidence" value="ECO:0007669"/>
    <property type="project" value="Ensembl"/>
</dbReference>
<dbReference type="GO" id="GO:0007254">
    <property type="term" value="P:JNK cascade"/>
    <property type="evidence" value="ECO:0000314"/>
    <property type="project" value="MGI"/>
</dbReference>
<dbReference type="GO" id="GO:0000165">
    <property type="term" value="P:MAPK cascade"/>
    <property type="evidence" value="ECO:0000314"/>
    <property type="project" value="MGI"/>
</dbReference>
<dbReference type="GO" id="GO:0007520">
    <property type="term" value="P:myoblast fusion"/>
    <property type="evidence" value="ECO:0000315"/>
    <property type="project" value="UniProtKB"/>
</dbReference>
<dbReference type="GO" id="GO:0072015">
    <property type="term" value="P:podocyte development"/>
    <property type="evidence" value="ECO:0007669"/>
    <property type="project" value="Ensembl"/>
</dbReference>
<dbReference type="GO" id="GO:0030838">
    <property type="term" value="P:positive regulation of actin filament polymerization"/>
    <property type="evidence" value="ECO:0000316"/>
    <property type="project" value="MGI"/>
</dbReference>
<dbReference type="GO" id="GO:0035418">
    <property type="term" value="P:protein localization to synapse"/>
    <property type="evidence" value="ECO:0007669"/>
    <property type="project" value="Ensembl"/>
</dbReference>
<dbReference type="GO" id="GO:0007519">
    <property type="term" value="P:skeletal muscle tissue development"/>
    <property type="evidence" value="ECO:0000315"/>
    <property type="project" value="UniProtKB"/>
</dbReference>
<dbReference type="GO" id="GO:0036060">
    <property type="term" value="P:slit diaphragm assembly"/>
    <property type="evidence" value="ECO:0000315"/>
    <property type="project" value="UniProtKB"/>
</dbReference>
<dbReference type="CDD" id="cd00063">
    <property type="entry name" value="FN3"/>
    <property type="match status" value="1"/>
</dbReference>
<dbReference type="FunFam" id="2.60.40.10:FF:000405">
    <property type="entry name" value="nephrin isoform X1"/>
    <property type="match status" value="1"/>
</dbReference>
<dbReference type="FunFam" id="2.60.40.10:FF:000719">
    <property type="entry name" value="nephrin isoform X1"/>
    <property type="match status" value="1"/>
</dbReference>
<dbReference type="FunFam" id="2.60.40.10:FF:000853">
    <property type="entry name" value="NPHS1, nephrin"/>
    <property type="match status" value="1"/>
</dbReference>
<dbReference type="FunFam" id="2.60.40.10:FF:001122">
    <property type="entry name" value="NPHS1, nephrin"/>
    <property type="match status" value="1"/>
</dbReference>
<dbReference type="FunFam" id="2.60.40.10:FF:001339">
    <property type="entry name" value="NPHS1, nephrin"/>
    <property type="match status" value="1"/>
</dbReference>
<dbReference type="FunFam" id="2.60.40.10:FF:001740">
    <property type="entry name" value="NPHS1, nephrin"/>
    <property type="match status" value="1"/>
</dbReference>
<dbReference type="Gene3D" id="2.60.40.10">
    <property type="entry name" value="Immunoglobulins"/>
    <property type="match status" value="10"/>
</dbReference>
<dbReference type="InterPro" id="IPR013162">
    <property type="entry name" value="CD80_C2-set"/>
</dbReference>
<dbReference type="InterPro" id="IPR051275">
    <property type="entry name" value="Cell_adhesion_signaling"/>
</dbReference>
<dbReference type="InterPro" id="IPR003961">
    <property type="entry name" value="FN3_dom"/>
</dbReference>
<dbReference type="InterPro" id="IPR036116">
    <property type="entry name" value="FN3_sf"/>
</dbReference>
<dbReference type="InterPro" id="IPR007110">
    <property type="entry name" value="Ig-like_dom"/>
</dbReference>
<dbReference type="InterPro" id="IPR036179">
    <property type="entry name" value="Ig-like_dom_sf"/>
</dbReference>
<dbReference type="InterPro" id="IPR013783">
    <property type="entry name" value="Ig-like_fold"/>
</dbReference>
<dbReference type="InterPro" id="IPR013098">
    <property type="entry name" value="Ig_I-set"/>
</dbReference>
<dbReference type="InterPro" id="IPR003599">
    <property type="entry name" value="Ig_sub"/>
</dbReference>
<dbReference type="InterPro" id="IPR003598">
    <property type="entry name" value="Ig_sub2"/>
</dbReference>
<dbReference type="PANTHER" id="PTHR11640">
    <property type="entry name" value="NEPHRIN"/>
    <property type="match status" value="1"/>
</dbReference>
<dbReference type="Pfam" id="PF08205">
    <property type="entry name" value="C2-set_2"/>
    <property type="match status" value="5"/>
</dbReference>
<dbReference type="Pfam" id="PF00041">
    <property type="entry name" value="fn3"/>
    <property type="match status" value="1"/>
</dbReference>
<dbReference type="Pfam" id="PF07679">
    <property type="entry name" value="I-set"/>
    <property type="match status" value="2"/>
</dbReference>
<dbReference type="Pfam" id="PF13927">
    <property type="entry name" value="Ig_3"/>
    <property type="match status" value="1"/>
</dbReference>
<dbReference type="SMART" id="SM00060">
    <property type="entry name" value="FN3"/>
    <property type="match status" value="1"/>
</dbReference>
<dbReference type="SMART" id="SM00409">
    <property type="entry name" value="IG"/>
    <property type="match status" value="8"/>
</dbReference>
<dbReference type="SMART" id="SM00408">
    <property type="entry name" value="IGc2"/>
    <property type="match status" value="6"/>
</dbReference>
<dbReference type="SUPFAM" id="SSF49265">
    <property type="entry name" value="Fibronectin type III"/>
    <property type="match status" value="1"/>
</dbReference>
<dbReference type="SUPFAM" id="SSF48726">
    <property type="entry name" value="Immunoglobulin"/>
    <property type="match status" value="9"/>
</dbReference>
<dbReference type="PROSITE" id="PS50853">
    <property type="entry name" value="FN3"/>
    <property type="match status" value="1"/>
</dbReference>
<dbReference type="PROSITE" id="PS50835">
    <property type="entry name" value="IG_LIKE"/>
    <property type="match status" value="8"/>
</dbReference>
<gene>
    <name type="primary">Nphs1</name>
    <name type="synonym">Nphn</name>
</gene>
<feature type="signal peptide" evidence="3">
    <location>
        <begin position="1"/>
        <end position="35"/>
    </location>
</feature>
<feature type="chain" id="PRO_0000015053" description="Nephrin">
    <location>
        <begin position="36"/>
        <end position="1256"/>
    </location>
</feature>
<feature type="topological domain" description="Extracellular" evidence="3">
    <location>
        <begin position="36"/>
        <end position="1078"/>
    </location>
</feature>
<feature type="transmembrane region" description="Helical" evidence="3">
    <location>
        <begin position="1079"/>
        <end position="1099"/>
    </location>
</feature>
<feature type="topological domain" description="Cytoplasmic" evidence="3">
    <location>
        <begin position="1100"/>
        <end position="1256"/>
    </location>
</feature>
<feature type="domain" description="Ig-like C2-type 1">
    <location>
        <begin position="39"/>
        <end position="144"/>
    </location>
</feature>
<feature type="domain" description="Ig-like C2-type 2">
    <location>
        <begin position="149"/>
        <end position="247"/>
    </location>
</feature>
<feature type="domain" description="Ig-like C2-type 3">
    <location>
        <begin position="256"/>
        <end position="347"/>
    </location>
</feature>
<feature type="domain" description="Ig-like C2-type 4">
    <location>
        <begin position="354"/>
        <end position="448"/>
    </location>
</feature>
<feature type="domain" description="Ig-like C2-type 5">
    <location>
        <begin position="454"/>
        <end position="554"/>
    </location>
</feature>
<feature type="domain" description="Ig-like C2-type 6">
    <location>
        <begin position="558"/>
        <end position="649"/>
    </location>
</feature>
<feature type="domain" description="Ig-like C2-type 7">
    <location>
        <begin position="754"/>
        <end position="846"/>
    </location>
</feature>
<feature type="domain" description="Ig-like C2-type 8">
    <location>
        <begin position="852"/>
        <end position="953"/>
    </location>
</feature>
<feature type="domain" description="Fibronectin type-III" evidence="5">
    <location>
        <begin position="957"/>
        <end position="1051"/>
    </location>
</feature>
<feature type="region of interest" description="Disordered" evidence="6">
    <location>
        <begin position="491"/>
        <end position="516"/>
    </location>
</feature>
<feature type="region of interest" description="Disordered" evidence="6">
    <location>
        <begin position="1048"/>
        <end position="1071"/>
    </location>
</feature>
<feature type="region of interest" description="Disordered" evidence="6">
    <location>
        <begin position="1112"/>
        <end position="1143"/>
    </location>
</feature>
<feature type="compositionally biased region" description="Basic and acidic residues" evidence="6">
    <location>
        <begin position="494"/>
        <end position="510"/>
    </location>
</feature>
<feature type="compositionally biased region" description="Basic and acidic residues" evidence="6">
    <location>
        <begin position="1112"/>
        <end position="1128"/>
    </location>
</feature>
<feature type="modified residue" description="Phosphoserine" evidence="1">
    <location>
        <position position="446"/>
    </location>
</feature>
<feature type="modified residue" description="Phosphoserine" evidence="2">
    <location>
        <position position="1112"/>
    </location>
</feature>
<feature type="modified residue" description="Phosphothreonine" evidence="2">
    <location>
        <position position="1115"/>
    </location>
</feature>
<feature type="modified residue" description="Phosphoserine" evidence="2">
    <location>
        <position position="1119"/>
    </location>
</feature>
<feature type="modified residue" description="Phosphotyrosine; by FYN" evidence="2">
    <location>
        <position position="1208"/>
    </location>
</feature>
<feature type="glycosylation site" description="N-linked (GlcNAc...) asparagine" evidence="3">
    <location>
        <position position="54"/>
    </location>
</feature>
<feature type="glycosylation site" description="N-linked (GlcNAc...) asparagine" evidence="3">
    <location>
        <position position="370"/>
    </location>
</feature>
<feature type="glycosylation site" description="N-linked (GlcNAc...) asparagine" evidence="3">
    <location>
        <position position="415"/>
    </location>
</feature>
<feature type="glycosylation site" description="N-linked (GlcNAc...) asparagine" evidence="3">
    <location>
        <position position="561"/>
    </location>
</feature>
<feature type="glycosylation site" description="N-linked (GlcNAc...) asparagine" evidence="3">
    <location>
        <position position="578"/>
    </location>
</feature>
<feature type="glycosylation site" description="N-linked (GlcNAc...) asparagine" evidence="3">
    <location>
        <position position="591"/>
    </location>
</feature>
<feature type="glycosylation site" description="N-linked (GlcNAc...) asparagine" evidence="3">
    <location>
        <position position="722"/>
    </location>
</feature>
<feature type="disulfide bond" evidence="4">
    <location>
        <begin position="67"/>
        <end position="125"/>
    </location>
</feature>
<feature type="disulfide bond" evidence="4">
    <location>
        <begin position="174"/>
        <end position="231"/>
    </location>
</feature>
<feature type="disulfide bond" evidence="4">
    <location>
        <begin position="279"/>
        <end position="331"/>
    </location>
</feature>
<feature type="disulfide bond" evidence="4">
    <location>
        <begin position="375"/>
        <end position="431"/>
    </location>
</feature>
<feature type="disulfide bond" evidence="4">
    <location>
        <begin position="479"/>
        <end position="542"/>
    </location>
</feature>
<feature type="disulfide bond" evidence="4">
    <location>
        <begin position="581"/>
        <end position="637"/>
    </location>
</feature>
<feature type="disulfide bond" evidence="4">
    <location>
        <begin position="775"/>
        <end position="830"/>
    </location>
</feature>
<feature type="disulfide bond" evidence="4">
    <location>
        <begin position="877"/>
        <end position="934"/>
    </location>
</feature>
<feature type="splice variant" id="VSP_040676" description="In isoform 2." evidence="21">
    <original>MGAKEATVRGPGASPVHRTCHLIPLLLAGMLTT</original>
    <variation>MEKWRAWDPQSIQRRKTAK</variation>
    <location>
        <begin position="1"/>
        <end position="33"/>
    </location>
</feature>
<feature type="sequence conflict" description="In Ref. 1; AAF03368." evidence="22" ref="1">
    <original>MGAKEATVRGPGASPVHRTCHLIP</original>
    <variation>MALGTTLRAS</variation>
    <location>
        <begin position="1"/>
        <end position="24"/>
    </location>
</feature>
<feature type="sequence conflict" description="In Ref. 2; AAF91087." evidence="22" ref="2">
    <original>A</original>
    <variation>V</variation>
    <location>
        <position position="6"/>
    </location>
</feature>
<feature type="sequence conflict" description="In Ref. 2; AAF91087." evidence="22" ref="2">
    <original>H</original>
    <variation>R</variation>
    <location>
        <position position="21"/>
    </location>
</feature>
<feature type="sequence conflict" description="In Ref. 2; AAF91085, 3; AAG17142/AAK38483 and 4; BAI63574." evidence="22" ref="2 3 4">
    <original>S</original>
    <variation>P</variation>
    <location>
        <position position="43"/>
    </location>
</feature>
<feature type="sequence conflict" description="In Ref. 1; AAF03368 and 2; AAF91087." evidence="22" ref="1 2">
    <original>V</original>
    <variation>I</variation>
    <location>
        <position position="63"/>
    </location>
</feature>
<feature type="sequence conflict" description="In Ref. 1; AAF03368 and 2; AAF91087." evidence="22" ref="1 2">
    <original>S</original>
    <variation>R</variation>
    <location>
        <position position="140"/>
    </location>
</feature>
<feature type="sequence conflict" description="In Ref. 1; AAF03368 and 2; AAF91087." evidence="22" ref="1 2">
    <original>I</original>
    <variation>V</variation>
    <location>
        <position position="145"/>
    </location>
</feature>
<feature type="sequence conflict" description="In Ref. 1; AAF03368 and 2; AAF91087." evidence="22" ref="1 2">
    <original>S</original>
    <variation>P</variation>
    <location>
        <position position="148"/>
    </location>
</feature>
<feature type="sequence conflict" description="In Ref. 1; AAF03368 and 2; AAF91087." evidence="22" ref="1 2">
    <original>D</original>
    <variation>G</variation>
    <location>
        <position position="178"/>
    </location>
</feature>
<feature type="sequence conflict" description="In Ref. 1; AAF03368." evidence="22" ref="1">
    <original>T</original>
    <variation>A</variation>
    <location>
        <position position="763"/>
    </location>
</feature>
<feature type="sequence conflict" description="In Ref. 1; AAF03368 and 2; AAF91087." evidence="22" ref="1 2">
    <original>S</original>
    <variation>T</variation>
    <location>
        <position position="996"/>
    </location>
</feature>
<feature type="sequence conflict" description="In Ref. 1; AAF03368." evidence="22" ref="1">
    <original>L</original>
    <variation>Q</variation>
    <location>
        <position position="1076"/>
    </location>
</feature>